<name>YIDC_ECOUT</name>
<gene>
    <name evidence="1" type="primary">yidC</name>
    <name type="ordered locus">UTI89_C4258</name>
</gene>
<feature type="chain" id="PRO_1000070089" description="Membrane protein insertase YidC">
    <location>
        <begin position="1"/>
        <end position="548"/>
    </location>
</feature>
<feature type="transmembrane region" description="Helical" evidence="1">
    <location>
        <begin position="6"/>
        <end position="26"/>
    </location>
</feature>
<feature type="transmembrane region" description="Helical" evidence="1">
    <location>
        <begin position="350"/>
        <end position="370"/>
    </location>
</feature>
<feature type="transmembrane region" description="Helical" evidence="1">
    <location>
        <begin position="420"/>
        <end position="440"/>
    </location>
</feature>
<feature type="transmembrane region" description="Helical" evidence="1">
    <location>
        <begin position="458"/>
        <end position="478"/>
    </location>
</feature>
<feature type="transmembrane region" description="Helical" evidence="1">
    <location>
        <begin position="499"/>
        <end position="519"/>
    </location>
</feature>
<feature type="region of interest" description="Disordered" evidence="2">
    <location>
        <begin position="28"/>
        <end position="55"/>
    </location>
</feature>
<feature type="compositionally biased region" description="Low complexity" evidence="2">
    <location>
        <begin position="30"/>
        <end position="50"/>
    </location>
</feature>
<feature type="strand" evidence="3">
    <location>
        <begin position="60"/>
        <end position="64"/>
    </location>
</feature>
<feature type="strand" evidence="3">
    <location>
        <begin position="69"/>
        <end position="73"/>
    </location>
</feature>
<feature type="strand" evidence="3">
    <location>
        <begin position="78"/>
        <end position="90"/>
    </location>
</feature>
<feature type="strand" evidence="3">
    <location>
        <begin position="95"/>
        <end position="100"/>
    </location>
</feature>
<feature type="strand" evidence="3">
    <location>
        <begin position="107"/>
        <end position="118"/>
    </location>
</feature>
<feature type="helix" evidence="3">
    <location>
        <begin position="123"/>
        <end position="125"/>
    </location>
</feature>
<feature type="strand" evidence="3">
    <location>
        <begin position="136"/>
        <end position="139"/>
    </location>
</feature>
<feature type="strand" evidence="3">
    <location>
        <begin position="145"/>
        <end position="154"/>
    </location>
</feature>
<feature type="strand" evidence="3">
    <location>
        <begin position="160"/>
        <end position="168"/>
    </location>
</feature>
<feature type="strand" evidence="3">
    <location>
        <begin position="173"/>
        <end position="181"/>
    </location>
</feature>
<feature type="strand" evidence="3">
    <location>
        <begin position="184"/>
        <end position="186"/>
    </location>
</feature>
<feature type="strand" evidence="3">
    <location>
        <begin position="188"/>
        <end position="201"/>
    </location>
</feature>
<feature type="strand" evidence="3">
    <location>
        <begin position="220"/>
        <end position="224"/>
    </location>
</feature>
<feature type="strand" evidence="3">
    <location>
        <begin position="226"/>
        <end position="229"/>
    </location>
</feature>
<feature type="strand" evidence="3">
    <location>
        <begin position="231"/>
        <end position="233"/>
    </location>
</feature>
<feature type="helix" evidence="3">
    <location>
        <begin position="235"/>
        <end position="239"/>
    </location>
</feature>
<feature type="strand" evidence="3">
    <location>
        <begin position="245"/>
        <end position="250"/>
    </location>
</feature>
<feature type="strand" evidence="3">
    <location>
        <begin position="252"/>
        <end position="256"/>
    </location>
</feature>
<feature type="strand" evidence="3">
    <location>
        <begin position="258"/>
        <end position="270"/>
    </location>
</feature>
<feature type="strand" evidence="3">
    <location>
        <begin position="272"/>
        <end position="278"/>
    </location>
</feature>
<feature type="strand" evidence="3">
    <location>
        <begin position="283"/>
        <end position="289"/>
    </location>
</feature>
<feature type="strand" evidence="3">
    <location>
        <begin position="293"/>
        <end position="295"/>
    </location>
</feature>
<feature type="strand" evidence="3">
    <location>
        <begin position="300"/>
        <end position="311"/>
    </location>
</feature>
<feature type="helix" evidence="3">
    <location>
        <begin position="314"/>
        <end position="320"/>
    </location>
</feature>
<feature type="helix" evidence="3">
    <location>
        <begin position="324"/>
        <end position="327"/>
    </location>
</feature>
<feature type="helix" evidence="3">
    <location>
        <begin position="334"/>
        <end position="351"/>
    </location>
</feature>
<feature type="helix" evidence="3">
    <location>
        <begin position="354"/>
        <end position="368"/>
    </location>
</feature>
<feature type="helix" evidence="3">
    <location>
        <begin position="370"/>
        <end position="397"/>
    </location>
</feature>
<feature type="helix" evidence="3">
    <location>
        <begin position="401"/>
        <end position="415"/>
    </location>
</feature>
<feature type="helix" evidence="3">
    <location>
        <begin position="424"/>
        <end position="442"/>
    </location>
</feature>
<feature type="turn" evidence="3">
    <location>
        <begin position="445"/>
        <end position="448"/>
    </location>
</feature>
<feature type="strand" evidence="3">
    <location>
        <begin position="458"/>
        <end position="460"/>
    </location>
</feature>
<feature type="helix" evidence="3">
    <location>
        <begin position="466"/>
        <end position="476"/>
    </location>
</feature>
<feature type="helix" evidence="3">
    <location>
        <begin position="494"/>
        <end position="496"/>
    </location>
</feature>
<feature type="helix" evidence="3">
    <location>
        <begin position="498"/>
        <end position="505"/>
    </location>
</feature>
<feature type="turn" evidence="3">
    <location>
        <begin position="506"/>
        <end position="508"/>
    </location>
</feature>
<feature type="helix" evidence="3">
    <location>
        <begin position="511"/>
        <end position="527"/>
    </location>
</feature>
<protein>
    <recommendedName>
        <fullName evidence="1">Membrane protein insertase YidC</fullName>
    </recommendedName>
    <alternativeName>
        <fullName evidence="1">Foldase YidC</fullName>
    </alternativeName>
    <alternativeName>
        <fullName evidence="1">Membrane integrase YidC</fullName>
    </alternativeName>
    <alternativeName>
        <fullName evidence="1">Membrane protein YidC</fullName>
    </alternativeName>
</protein>
<organism>
    <name type="scientific">Escherichia coli (strain UTI89 / UPEC)</name>
    <dbReference type="NCBI Taxonomy" id="364106"/>
    <lineage>
        <taxon>Bacteria</taxon>
        <taxon>Pseudomonadati</taxon>
        <taxon>Pseudomonadota</taxon>
        <taxon>Gammaproteobacteria</taxon>
        <taxon>Enterobacterales</taxon>
        <taxon>Enterobacteriaceae</taxon>
        <taxon>Escherichia</taxon>
    </lineage>
</organism>
<proteinExistence type="evidence at protein level"/>
<evidence type="ECO:0000255" key="1">
    <source>
        <dbReference type="HAMAP-Rule" id="MF_01810"/>
    </source>
</evidence>
<evidence type="ECO:0000256" key="2">
    <source>
        <dbReference type="SAM" id="MobiDB-lite"/>
    </source>
</evidence>
<evidence type="ECO:0007829" key="3">
    <source>
        <dbReference type="PDB" id="3WVF"/>
    </source>
</evidence>
<comment type="function">
    <text evidence="1">Required for the insertion and/or proper folding and/or complex formation of integral membrane proteins into the membrane. Involved in integration of membrane proteins that insert both dependently and independently of the Sec translocase complex, as well as at least some lipoproteins. Aids folding of multispanning membrane proteins.</text>
</comment>
<comment type="subunit">
    <text evidence="1">Interacts with the Sec translocase complex via SecD. Specifically interacts with transmembrane segments of nascent integral membrane proteins during membrane integration.</text>
</comment>
<comment type="subcellular location">
    <subcellularLocation>
        <location evidence="1">Cell inner membrane</location>
        <topology evidence="1">Multi-pass membrane protein</topology>
    </subcellularLocation>
</comment>
<comment type="similarity">
    <text evidence="1">Belongs to the OXA1/ALB3/YidC family. Type 1 subfamily.</text>
</comment>
<keyword id="KW-0002">3D-structure</keyword>
<keyword id="KW-0997">Cell inner membrane</keyword>
<keyword id="KW-1003">Cell membrane</keyword>
<keyword id="KW-0143">Chaperone</keyword>
<keyword id="KW-0472">Membrane</keyword>
<keyword id="KW-0653">Protein transport</keyword>
<keyword id="KW-0812">Transmembrane</keyword>
<keyword id="KW-1133">Transmembrane helix</keyword>
<keyword id="KW-0813">Transport</keyword>
<sequence>MDSQRNLLVIALLFVSFMIWQAWEQDKNPQPQAQQTTQTTTTAAGSAADQGVPASGQGKLISVKTDVLDLTINTRGGDVEQALLPAYPKELNSTQPFQLLETSPQFIYQAQSGLTGRDGPDNPANGPRPLYNVEKDAYVLAEGQNELQVPMTYTDAAGNTFTKTFVLKRGDYAVNVNYNVQNAGEKPLEISTFGQLKQSITLPPHLDTGSSNFALHTFRGAAYSTPDEKYEKYKFDTIADNENLNISSKGGWVAMLQQYFATAWIPHNDGTNNFYTANLGNGIAAIGYKSQPVLVQPGQTGAMNSTLWVGPEIQDKMAAVAPHLDLTVDYGWLWFISQPLFKLLKWIHSFVGNWGFSIIIITFIVRGIMYPLTKAQYTSMAKMRMLQPKIQAMRERLGDDKQRISQEMMALYKAEKVNPLGGCFPLLIQMPIFLALYYMLMGSVELRQAPFALWIHDLSAQDPYYILPILMGVTMFFIQKMSPTTVTDPMQQKIMTFMPVIFTVFFLWFPSGLVLYYIVSNLVTIIQQQLIYRGLEKRGLHSREKKKS</sequence>
<dbReference type="EMBL" id="CP000243">
    <property type="protein sequence ID" value="ABE09685.1"/>
    <property type="molecule type" value="Genomic_DNA"/>
</dbReference>
<dbReference type="RefSeq" id="WP_000378258.1">
    <property type="nucleotide sequence ID" value="NZ_CP064825.1"/>
</dbReference>
<dbReference type="PDB" id="3WVF">
    <property type="method" value="X-ray"/>
    <property type="resolution" value="3.20 A"/>
    <property type="chains" value="A/B=1-540"/>
</dbReference>
<dbReference type="PDBsum" id="3WVF"/>
<dbReference type="SMR" id="Q1R4M9"/>
<dbReference type="GeneID" id="93778448"/>
<dbReference type="KEGG" id="eci:UTI89_C4258"/>
<dbReference type="HOGENOM" id="CLU_016535_3_0_6"/>
<dbReference type="EvolutionaryTrace" id="Q1R4M9"/>
<dbReference type="Proteomes" id="UP000001952">
    <property type="component" value="Chromosome"/>
</dbReference>
<dbReference type="GO" id="GO:0005886">
    <property type="term" value="C:plasma membrane"/>
    <property type="evidence" value="ECO:0007669"/>
    <property type="project" value="UniProtKB-SubCell"/>
</dbReference>
<dbReference type="GO" id="GO:0032977">
    <property type="term" value="F:membrane insertase activity"/>
    <property type="evidence" value="ECO:0007669"/>
    <property type="project" value="InterPro"/>
</dbReference>
<dbReference type="GO" id="GO:0051205">
    <property type="term" value="P:protein insertion into membrane"/>
    <property type="evidence" value="ECO:0007669"/>
    <property type="project" value="TreeGrafter"/>
</dbReference>
<dbReference type="GO" id="GO:0015031">
    <property type="term" value="P:protein transport"/>
    <property type="evidence" value="ECO:0007669"/>
    <property type="project" value="UniProtKB-KW"/>
</dbReference>
<dbReference type="CDD" id="cd20070">
    <property type="entry name" value="5TM_YidC_Alb3"/>
    <property type="match status" value="1"/>
</dbReference>
<dbReference type="CDD" id="cd19961">
    <property type="entry name" value="EcYidC-like_peri"/>
    <property type="match status" value="1"/>
</dbReference>
<dbReference type="FunFam" id="2.70.98.90:FF:000001">
    <property type="entry name" value="Membrane protein insertase YidC"/>
    <property type="match status" value="1"/>
</dbReference>
<dbReference type="Gene3D" id="2.70.98.90">
    <property type="match status" value="1"/>
</dbReference>
<dbReference type="HAMAP" id="MF_01810">
    <property type="entry name" value="YidC_type1"/>
    <property type="match status" value="1"/>
</dbReference>
<dbReference type="InterPro" id="IPR019998">
    <property type="entry name" value="Membr_insert_YidC"/>
</dbReference>
<dbReference type="InterPro" id="IPR028053">
    <property type="entry name" value="Membr_insert_YidC_N"/>
</dbReference>
<dbReference type="InterPro" id="IPR001708">
    <property type="entry name" value="YidC/ALB3/OXA1/COX18"/>
</dbReference>
<dbReference type="InterPro" id="IPR028055">
    <property type="entry name" value="YidC/Oxa/ALB_C"/>
</dbReference>
<dbReference type="InterPro" id="IPR047196">
    <property type="entry name" value="YidC_ALB_C"/>
</dbReference>
<dbReference type="InterPro" id="IPR038221">
    <property type="entry name" value="YidC_periplasmic_sf"/>
</dbReference>
<dbReference type="NCBIfam" id="NF002351">
    <property type="entry name" value="PRK01318.1-1"/>
    <property type="match status" value="1"/>
</dbReference>
<dbReference type="NCBIfam" id="NF002352">
    <property type="entry name" value="PRK01318.1-3"/>
    <property type="match status" value="1"/>
</dbReference>
<dbReference type="NCBIfam" id="NF002353">
    <property type="entry name" value="PRK01318.1-4"/>
    <property type="match status" value="1"/>
</dbReference>
<dbReference type="NCBIfam" id="TIGR03593">
    <property type="entry name" value="yidC_nterm"/>
    <property type="match status" value="1"/>
</dbReference>
<dbReference type="NCBIfam" id="TIGR03592">
    <property type="entry name" value="yidC_oxa1_cterm"/>
    <property type="match status" value="1"/>
</dbReference>
<dbReference type="PANTHER" id="PTHR12428:SF65">
    <property type="entry name" value="CYTOCHROME C OXIDASE ASSEMBLY PROTEIN COX18, MITOCHONDRIAL"/>
    <property type="match status" value="1"/>
</dbReference>
<dbReference type="PANTHER" id="PTHR12428">
    <property type="entry name" value="OXA1"/>
    <property type="match status" value="1"/>
</dbReference>
<dbReference type="Pfam" id="PF02096">
    <property type="entry name" value="60KD_IMP"/>
    <property type="match status" value="1"/>
</dbReference>
<dbReference type="Pfam" id="PF14849">
    <property type="entry name" value="YidC_periplas"/>
    <property type="match status" value="1"/>
</dbReference>
<dbReference type="PRINTS" id="PR00701">
    <property type="entry name" value="60KDINNERMP"/>
</dbReference>
<dbReference type="PRINTS" id="PR01900">
    <property type="entry name" value="YIDCPROTEIN"/>
</dbReference>
<reference key="1">
    <citation type="journal article" date="2006" name="Proc. Natl. Acad. Sci. U.S.A.">
        <title>Identification of genes subject to positive selection in uropathogenic strains of Escherichia coli: a comparative genomics approach.</title>
        <authorList>
            <person name="Chen S.L."/>
            <person name="Hung C.-S."/>
            <person name="Xu J."/>
            <person name="Reigstad C.S."/>
            <person name="Magrini V."/>
            <person name="Sabo A."/>
            <person name="Blasiar D."/>
            <person name="Bieri T."/>
            <person name="Meyer R.R."/>
            <person name="Ozersky P."/>
            <person name="Armstrong J.R."/>
            <person name="Fulton R.S."/>
            <person name="Latreille J.P."/>
            <person name="Spieth J."/>
            <person name="Hooton T.M."/>
            <person name="Mardis E.R."/>
            <person name="Hultgren S.J."/>
            <person name="Gordon J.I."/>
        </authorList>
    </citation>
    <scope>NUCLEOTIDE SEQUENCE [LARGE SCALE GENOMIC DNA]</scope>
    <source>
        <strain>UTI89 / UPEC</strain>
    </source>
</reference>
<accession>Q1R4M9</accession>